<comment type="function">
    <text evidence="1">One of the primary rRNA binding proteins, it binds directly near the 3'-end of the 23S rRNA, where it nucleates assembly of the 50S subunit.</text>
</comment>
<comment type="subunit">
    <text evidence="1">Part of the 50S ribosomal subunit. Forms a cluster with proteins L14 and L19.</text>
</comment>
<comment type="PTM">
    <text evidence="1">Methylated by PrmB.</text>
</comment>
<comment type="similarity">
    <text evidence="1">Belongs to the universal ribosomal protein uL3 family.</text>
</comment>
<gene>
    <name evidence="1" type="primary">rplC</name>
    <name type="ordered locus">VCM66_2516</name>
</gene>
<name>RL3_VIBCM</name>
<keyword id="KW-0488">Methylation</keyword>
<keyword id="KW-0687">Ribonucleoprotein</keyword>
<keyword id="KW-0689">Ribosomal protein</keyword>
<keyword id="KW-0694">RNA-binding</keyword>
<keyword id="KW-0699">rRNA-binding</keyword>
<feature type="chain" id="PRO_1000165914" description="Large ribosomal subunit protein uL3">
    <location>
        <begin position="1"/>
        <end position="209"/>
    </location>
</feature>
<feature type="modified residue" description="N5-methylglutamine" evidence="1">
    <location>
        <position position="150"/>
    </location>
</feature>
<protein>
    <recommendedName>
        <fullName evidence="1">Large ribosomal subunit protein uL3</fullName>
    </recommendedName>
    <alternativeName>
        <fullName evidence="2">50S ribosomal protein L3</fullName>
    </alternativeName>
</protein>
<sequence>MIGLIGRKVGMTRVFTEDGVSIPVTVVEVEANRVSQVKTLETDGYAAIQVTTGSKKANRVTKPEAGHFAKAGVEAGRGLWEFRLENGEEFAVGSELTVELFNEVKKVDVTGTSKGKGFQGAVKRWNFRTQDMTHGNSLSHRAPGSIGQCQTPGRVFKGKKMAGHMGAERVTTQNLEIVRVDAERNLLLIKGAVPGATGGNVIVKPAVKA</sequence>
<proteinExistence type="inferred from homology"/>
<evidence type="ECO:0000255" key="1">
    <source>
        <dbReference type="HAMAP-Rule" id="MF_01325"/>
    </source>
</evidence>
<evidence type="ECO:0000305" key="2"/>
<organism>
    <name type="scientific">Vibrio cholerae serotype O1 (strain M66-2)</name>
    <dbReference type="NCBI Taxonomy" id="579112"/>
    <lineage>
        <taxon>Bacteria</taxon>
        <taxon>Pseudomonadati</taxon>
        <taxon>Pseudomonadota</taxon>
        <taxon>Gammaproteobacteria</taxon>
        <taxon>Vibrionales</taxon>
        <taxon>Vibrionaceae</taxon>
        <taxon>Vibrio</taxon>
    </lineage>
</organism>
<reference key="1">
    <citation type="journal article" date="2008" name="PLoS ONE">
        <title>A recalibrated molecular clock and independent origins for the cholera pandemic clones.</title>
        <authorList>
            <person name="Feng L."/>
            <person name="Reeves P.R."/>
            <person name="Lan R."/>
            <person name="Ren Y."/>
            <person name="Gao C."/>
            <person name="Zhou Z."/>
            <person name="Ren Y."/>
            <person name="Cheng J."/>
            <person name="Wang W."/>
            <person name="Wang J."/>
            <person name="Qian W."/>
            <person name="Li D."/>
            <person name="Wang L."/>
        </authorList>
    </citation>
    <scope>NUCLEOTIDE SEQUENCE [LARGE SCALE GENOMIC DNA]</scope>
    <source>
        <strain>M66-2</strain>
    </source>
</reference>
<accession>C3LRQ8</accession>
<dbReference type="EMBL" id="CP001233">
    <property type="protein sequence ID" value="ACP06813.1"/>
    <property type="molecule type" value="Genomic_DNA"/>
</dbReference>
<dbReference type="RefSeq" id="WP_000579663.1">
    <property type="nucleotide sequence ID" value="NC_012578.1"/>
</dbReference>
<dbReference type="SMR" id="C3LRQ8"/>
<dbReference type="GeneID" id="69718800"/>
<dbReference type="KEGG" id="vcm:VCM66_2516"/>
<dbReference type="HOGENOM" id="CLU_044142_4_1_6"/>
<dbReference type="Proteomes" id="UP000001217">
    <property type="component" value="Chromosome I"/>
</dbReference>
<dbReference type="GO" id="GO:0022625">
    <property type="term" value="C:cytosolic large ribosomal subunit"/>
    <property type="evidence" value="ECO:0007669"/>
    <property type="project" value="TreeGrafter"/>
</dbReference>
<dbReference type="GO" id="GO:0019843">
    <property type="term" value="F:rRNA binding"/>
    <property type="evidence" value="ECO:0007669"/>
    <property type="project" value="UniProtKB-UniRule"/>
</dbReference>
<dbReference type="GO" id="GO:0003735">
    <property type="term" value="F:structural constituent of ribosome"/>
    <property type="evidence" value="ECO:0007669"/>
    <property type="project" value="InterPro"/>
</dbReference>
<dbReference type="GO" id="GO:0006412">
    <property type="term" value="P:translation"/>
    <property type="evidence" value="ECO:0007669"/>
    <property type="project" value="UniProtKB-UniRule"/>
</dbReference>
<dbReference type="FunFam" id="2.40.30.10:FF:000004">
    <property type="entry name" value="50S ribosomal protein L3"/>
    <property type="match status" value="1"/>
</dbReference>
<dbReference type="FunFam" id="3.30.160.810:FF:000001">
    <property type="entry name" value="50S ribosomal protein L3"/>
    <property type="match status" value="1"/>
</dbReference>
<dbReference type="Gene3D" id="3.30.160.810">
    <property type="match status" value="1"/>
</dbReference>
<dbReference type="Gene3D" id="2.40.30.10">
    <property type="entry name" value="Translation factors"/>
    <property type="match status" value="1"/>
</dbReference>
<dbReference type="HAMAP" id="MF_01325_B">
    <property type="entry name" value="Ribosomal_uL3_B"/>
    <property type="match status" value="1"/>
</dbReference>
<dbReference type="InterPro" id="IPR000597">
    <property type="entry name" value="Ribosomal_uL3"/>
</dbReference>
<dbReference type="InterPro" id="IPR019927">
    <property type="entry name" value="Ribosomal_uL3_bac/org-type"/>
</dbReference>
<dbReference type="InterPro" id="IPR019926">
    <property type="entry name" value="Ribosomal_uL3_CS"/>
</dbReference>
<dbReference type="InterPro" id="IPR009000">
    <property type="entry name" value="Transl_B-barrel_sf"/>
</dbReference>
<dbReference type="NCBIfam" id="TIGR03625">
    <property type="entry name" value="L3_bact"/>
    <property type="match status" value="1"/>
</dbReference>
<dbReference type="PANTHER" id="PTHR11229">
    <property type="entry name" value="50S RIBOSOMAL PROTEIN L3"/>
    <property type="match status" value="1"/>
</dbReference>
<dbReference type="PANTHER" id="PTHR11229:SF16">
    <property type="entry name" value="LARGE RIBOSOMAL SUBUNIT PROTEIN UL3C"/>
    <property type="match status" value="1"/>
</dbReference>
<dbReference type="Pfam" id="PF00297">
    <property type="entry name" value="Ribosomal_L3"/>
    <property type="match status" value="1"/>
</dbReference>
<dbReference type="SUPFAM" id="SSF50447">
    <property type="entry name" value="Translation proteins"/>
    <property type="match status" value="1"/>
</dbReference>
<dbReference type="PROSITE" id="PS00474">
    <property type="entry name" value="RIBOSOMAL_L3"/>
    <property type="match status" value="1"/>
</dbReference>